<organism>
    <name type="scientific">Mus musculus</name>
    <name type="common">Mouse</name>
    <dbReference type="NCBI Taxonomy" id="10090"/>
    <lineage>
        <taxon>Eukaryota</taxon>
        <taxon>Metazoa</taxon>
        <taxon>Chordata</taxon>
        <taxon>Craniata</taxon>
        <taxon>Vertebrata</taxon>
        <taxon>Euteleostomi</taxon>
        <taxon>Mammalia</taxon>
        <taxon>Eutheria</taxon>
        <taxon>Euarchontoglires</taxon>
        <taxon>Glires</taxon>
        <taxon>Rodentia</taxon>
        <taxon>Myomorpha</taxon>
        <taxon>Muroidea</taxon>
        <taxon>Muridae</taxon>
        <taxon>Murinae</taxon>
        <taxon>Mus</taxon>
        <taxon>Mus</taxon>
    </lineage>
</organism>
<comment type="function">
    <text>Increases the platelet count associated with splenomegaly. May have an important role in neuronal precursor development and maturation.</text>
</comment>
<comment type="subunit">
    <text>Binds to tripartite CNTF receptor complex consisting of CNTF alpha chain, LIFR and IL6ST (in vitro).</text>
</comment>
<comment type="interaction">
    <interactant intactId="EBI-25298303">
        <id>P83714</id>
    </interactant>
    <interactant intactId="EBI-1057058">
        <id>Q99523</id>
        <label>SORT1</label>
    </interactant>
    <organismsDiffer>true</organismsDiffer>
    <experiments>2</experiments>
</comment>
<comment type="subcellular location">
    <subcellularLocation>
        <location evidence="1">Secreted</location>
    </subcellularLocation>
</comment>
<comment type="tissue specificity">
    <text>Not detected in adult tissues.</text>
</comment>
<comment type="developmental stage">
    <text>Expressed in embryonic life, with a dramatic peak at day 11 of gestation. At 10 dpc, it is prominently expressed in cells scattered throughout all neuroepithelia, it is also detectable in cranial and dorsal root sensory ganglia, and spinal cord. At 14 dpc, outside the nervous system, it is detectable in vibrissae, dermis, and to a lesser extent in skeletal muscle, lung, and kidney.</text>
</comment>
<comment type="similarity">
    <text evidence="3">Belongs to the IL-6 superfamily.</text>
</comment>
<sequence>MYCLLATPLCLLSLLLPPLSPAAPISPSEPIGQAYSLALYMQKNTSALLQTYLQHQGSPFSDPGFSAPELQLSTLPSAAVSFKTWHAMEDAERLSRAQGAFLALTQHLQLVGDDQSYLNPGSPILLAQLGAARLRAQGLLGNMAAIMTALGLPIPPEEDTLGFVPFGASAFERKCRGYIVTREYGHWTDRAVRDLALLKAKYSA</sequence>
<feature type="signal peptide" evidence="2">
    <location>
        <begin position="1"/>
        <end position="22"/>
    </location>
</feature>
<feature type="chain" id="PRO_0000015614" description="Cardiotrophin-2">
    <location>
        <begin position="23"/>
        <end position="204"/>
    </location>
</feature>
<feature type="glycosylation site" description="N-linked (GlcNAc...) asparagine" evidence="2">
    <location>
        <position position="44"/>
    </location>
</feature>
<gene>
    <name type="primary">Ctf2</name>
    <name type="synonym">Gm494</name>
</gene>
<accession>P83714</accession>
<proteinExistence type="evidence at protein level"/>
<evidence type="ECO:0000250" key="1"/>
<evidence type="ECO:0000255" key="2"/>
<evidence type="ECO:0000305" key="3"/>
<reference key="1">
    <citation type="submission" date="2003-11" db="EMBL/GenBank/DDBJ databases">
        <title>Cardiotrophin-2 increases the platelet counts with splenomegaly in vivo.</title>
        <authorList>
            <person name="Hasegawa M."/>
            <person name="Habu K."/>
            <person name="Adachi Y."/>
            <person name="Natori O."/>
        </authorList>
    </citation>
    <scope>NUCLEOTIDE SEQUENCE [MRNA]</scope>
</reference>
<reference key="2">
    <citation type="journal article" date="2004" name="Proc. Natl. Acad. Sci. U.S.A.">
        <title>Neuropoietin, a new IL-6-related cytokine signaling through the ciliary neurotrophic factor receptor.</title>
        <authorList>
            <person name="Derouet D."/>
            <person name="Rousseau F."/>
            <person name="Alfonsi F."/>
            <person name="Froger J."/>
            <person name="Hermann J."/>
            <person name="Barbier F."/>
            <person name="Perret D."/>
            <person name="Diveu C."/>
            <person name="Guillet C."/>
            <person name="Preisser L."/>
            <person name="Dumont A."/>
            <person name="Barbado M."/>
            <person name="Morel A."/>
            <person name="DeLapeyriere O."/>
            <person name="Gascan H."/>
            <person name="Chevalier S."/>
        </authorList>
    </citation>
    <scope>NUCLEOTIDE SEQUENCE [MRNA]</scope>
    <scope>CHARACTERIZATION</scope>
    <source>
        <strain>BALB/cJ</strain>
        <tissue>Brain</tissue>
    </source>
</reference>
<protein>
    <recommendedName>
        <fullName>Cardiotrophin-2</fullName>
        <shortName>CT-2</shortName>
    </recommendedName>
    <alternativeName>
        <fullName>Neuropoietin</fullName>
        <shortName>Np</shortName>
    </alternativeName>
</protein>
<dbReference type="EMBL" id="AB125661">
    <property type="protein sequence ID" value="BAD01485.1"/>
    <property type="molecule type" value="mRNA"/>
</dbReference>
<dbReference type="EMBL" id="AY363390">
    <property type="protein sequence ID" value="AAR17733.1"/>
    <property type="molecule type" value="mRNA"/>
</dbReference>
<dbReference type="CCDS" id="CCDS21876.1"/>
<dbReference type="RefSeq" id="NP_942155.1">
    <property type="nucleotide sequence ID" value="NM_198858.1"/>
</dbReference>
<dbReference type="SMR" id="P83714"/>
<dbReference type="BioGRID" id="232625">
    <property type="interactions" value="3"/>
</dbReference>
<dbReference type="FunCoup" id="P83714">
    <property type="interactions" value="583"/>
</dbReference>
<dbReference type="IntAct" id="P83714">
    <property type="interactions" value="1"/>
</dbReference>
<dbReference type="STRING" id="10090.ENSMUSP00000075459"/>
<dbReference type="GlyCosmos" id="P83714">
    <property type="glycosylation" value="1 site, No reported glycans"/>
</dbReference>
<dbReference type="GlyGen" id="P83714">
    <property type="glycosylation" value="1 site"/>
</dbReference>
<dbReference type="PaxDb" id="10090-ENSMUSP00000075459"/>
<dbReference type="DNASU" id="244218"/>
<dbReference type="Ensembl" id="ENSMUST00000076091.4">
    <property type="protein sequence ID" value="ENSMUSP00000075459.3"/>
    <property type="gene ID" value="ENSMUSG00000060034.6"/>
</dbReference>
<dbReference type="GeneID" id="244218"/>
<dbReference type="KEGG" id="mmu:244218"/>
<dbReference type="UCSC" id="uc009jwn.1">
    <property type="organism name" value="mouse"/>
</dbReference>
<dbReference type="AGR" id="MGI:2684607"/>
<dbReference type="CTD" id="244218"/>
<dbReference type="MGI" id="MGI:2684607">
    <property type="gene designation" value="Ctf2"/>
</dbReference>
<dbReference type="VEuPathDB" id="HostDB:ENSMUSG00000060034"/>
<dbReference type="eggNOG" id="ENOG502S1XV">
    <property type="taxonomic scope" value="Eukaryota"/>
</dbReference>
<dbReference type="GeneTree" id="ENSGT00510000048856"/>
<dbReference type="HOGENOM" id="CLU_117935_0_0_1"/>
<dbReference type="InParanoid" id="P83714"/>
<dbReference type="OMA" id="TAFFKTW"/>
<dbReference type="OrthoDB" id="9948731at2759"/>
<dbReference type="PhylomeDB" id="P83714"/>
<dbReference type="TreeFam" id="TF333266"/>
<dbReference type="BioGRID-ORCS" id="244218">
    <property type="hits" value="0 hits in 77 CRISPR screens"/>
</dbReference>
<dbReference type="ChiTaRS" id="Ctf2">
    <property type="organism name" value="mouse"/>
</dbReference>
<dbReference type="PRO" id="PR:P83714"/>
<dbReference type="Proteomes" id="UP000000589">
    <property type="component" value="Chromosome 7"/>
</dbReference>
<dbReference type="RNAct" id="P83714">
    <property type="molecule type" value="protein"/>
</dbReference>
<dbReference type="Bgee" id="ENSMUSG00000060034">
    <property type="expression patterns" value="Expressed in primary oocyte and 46 other cell types or tissues"/>
</dbReference>
<dbReference type="ExpressionAtlas" id="P83714">
    <property type="expression patterns" value="baseline and differential"/>
</dbReference>
<dbReference type="GO" id="GO:0005615">
    <property type="term" value="C:extracellular space"/>
    <property type="evidence" value="ECO:0007669"/>
    <property type="project" value="UniProtKB-KW"/>
</dbReference>
<dbReference type="GO" id="GO:0005127">
    <property type="term" value="F:ciliary neurotrophic factor receptor binding"/>
    <property type="evidence" value="ECO:0000353"/>
    <property type="project" value="MGI"/>
</dbReference>
<dbReference type="GO" id="GO:0005125">
    <property type="term" value="F:cytokine activity"/>
    <property type="evidence" value="ECO:0007669"/>
    <property type="project" value="UniProtKB-KW"/>
</dbReference>
<dbReference type="GO" id="GO:0005146">
    <property type="term" value="F:leukemia inhibitory factor receptor binding"/>
    <property type="evidence" value="ECO:0000353"/>
    <property type="project" value="MGI"/>
</dbReference>
<dbReference type="GO" id="GO:0008283">
    <property type="term" value="P:cell population proliferation"/>
    <property type="evidence" value="ECO:0000316"/>
    <property type="project" value="MGI"/>
</dbReference>
<dbReference type="GO" id="GO:0007405">
    <property type="term" value="P:neuroblast proliferation"/>
    <property type="evidence" value="ECO:0000316"/>
    <property type="project" value="MGI"/>
</dbReference>
<dbReference type="GO" id="GO:0002052">
    <property type="term" value="P:positive regulation of neuroblast proliferation"/>
    <property type="evidence" value="ECO:0000316"/>
    <property type="project" value="MGI"/>
</dbReference>
<dbReference type="FunFam" id="1.20.1250.10:FF:000023">
    <property type="entry name" value="Cardiotrophin-2"/>
    <property type="match status" value="1"/>
</dbReference>
<dbReference type="Gene3D" id="1.20.1250.10">
    <property type="match status" value="1"/>
</dbReference>
<dbReference type="InterPro" id="IPR009079">
    <property type="entry name" value="4_helix_cytokine-like_core"/>
</dbReference>
<dbReference type="InterPro" id="IPR010681">
    <property type="entry name" value="PRF/CT"/>
</dbReference>
<dbReference type="PANTHER" id="PTHR21353">
    <property type="match status" value="1"/>
</dbReference>
<dbReference type="PANTHER" id="PTHR21353:SF8">
    <property type="entry name" value="CARDIOTROPHIN-2"/>
    <property type="match status" value="1"/>
</dbReference>
<dbReference type="Pfam" id="PF06875">
    <property type="entry name" value="PRF"/>
    <property type="match status" value="1"/>
</dbReference>
<dbReference type="SUPFAM" id="SSF47266">
    <property type="entry name" value="4-helical cytokines"/>
    <property type="match status" value="1"/>
</dbReference>
<keyword id="KW-0202">Cytokine</keyword>
<keyword id="KW-0217">Developmental protein</keyword>
<keyword id="KW-0325">Glycoprotein</keyword>
<keyword id="KW-1185">Reference proteome</keyword>
<keyword id="KW-0964">Secreted</keyword>
<keyword id="KW-0732">Signal</keyword>
<name>CTF2_MOUSE</name>